<name>HIS6_DICTD</name>
<evidence type="ECO:0000255" key="1">
    <source>
        <dbReference type="HAMAP-Rule" id="MF_01013"/>
    </source>
</evidence>
<reference key="1">
    <citation type="journal article" date="2016" name="Front. Microbiol.">
        <title>The complete genome sequence of hyperthermophile Dictyoglomus turgidum DSM 6724 reveals a specialized carbohydrate fermentor.</title>
        <authorList>
            <person name="Brumm P.J."/>
            <person name="Gowda K."/>
            <person name="Robb F.T."/>
            <person name="Mead D.A."/>
        </authorList>
    </citation>
    <scope>NUCLEOTIDE SEQUENCE [LARGE SCALE GENOMIC DNA]</scope>
    <source>
        <strain>DSM 6724 / Z-1310</strain>
    </source>
</reference>
<gene>
    <name evidence="1" type="primary">hisF</name>
    <name type="ordered locus">Dtur_1126</name>
</gene>
<sequence length="252" mass="27508">MLAKRIIPCLDTIGKKVVKGTSFINVRVVGDAKELARRYEKEGADEIVLLDITASEEGRSTFVDVVTDVASELFVPLTVGGGIKNIEDVRRLLKAGADKVSINTSAVENPDLINQIASEFGSQCLVVAIDVKRRGKKSWEVYIKGGKVPTGIDFKDWVIEVEKRGAGEILLTSIDADGHLSGYDYELLEYALSYSNLPLIASGGAGSLEDLYKALKIGVDAVLAASIFHFGTYSIPEVKRYLREKGIWVRLD</sequence>
<comment type="function">
    <text evidence="1">IGPS catalyzes the conversion of PRFAR and glutamine to IGP, AICAR and glutamate. The HisF subunit catalyzes the cyclization activity that produces IGP and AICAR from PRFAR using the ammonia provided by the HisH subunit.</text>
</comment>
<comment type="catalytic activity">
    <reaction evidence="1">
        <text>5-[(5-phospho-1-deoxy-D-ribulos-1-ylimino)methylamino]-1-(5-phospho-beta-D-ribosyl)imidazole-4-carboxamide + L-glutamine = D-erythro-1-(imidazol-4-yl)glycerol 3-phosphate + 5-amino-1-(5-phospho-beta-D-ribosyl)imidazole-4-carboxamide + L-glutamate + H(+)</text>
        <dbReference type="Rhea" id="RHEA:24793"/>
        <dbReference type="ChEBI" id="CHEBI:15378"/>
        <dbReference type="ChEBI" id="CHEBI:29985"/>
        <dbReference type="ChEBI" id="CHEBI:58278"/>
        <dbReference type="ChEBI" id="CHEBI:58359"/>
        <dbReference type="ChEBI" id="CHEBI:58475"/>
        <dbReference type="ChEBI" id="CHEBI:58525"/>
        <dbReference type="EC" id="4.3.2.10"/>
    </reaction>
</comment>
<comment type="pathway">
    <text evidence="1">Amino-acid biosynthesis; L-histidine biosynthesis; L-histidine from 5-phospho-alpha-D-ribose 1-diphosphate: step 5/9.</text>
</comment>
<comment type="subunit">
    <text evidence="1">Heterodimer of HisH and HisF.</text>
</comment>
<comment type="subcellular location">
    <subcellularLocation>
        <location evidence="1">Cytoplasm</location>
    </subcellularLocation>
</comment>
<comment type="similarity">
    <text evidence="1">Belongs to the HisA/HisF family.</text>
</comment>
<protein>
    <recommendedName>
        <fullName evidence="1">Imidazole glycerol phosphate synthase subunit HisF</fullName>
        <ecNumber evidence="1">4.3.2.10</ecNumber>
    </recommendedName>
    <alternativeName>
        <fullName evidence="1">IGP synthase cyclase subunit</fullName>
    </alternativeName>
    <alternativeName>
        <fullName evidence="1">IGP synthase subunit HisF</fullName>
    </alternativeName>
    <alternativeName>
        <fullName evidence="1">ImGP synthase subunit HisF</fullName>
        <shortName evidence="1">IGPS subunit HisF</shortName>
    </alternativeName>
</protein>
<dbReference type="EC" id="4.3.2.10" evidence="1"/>
<dbReference type="EMBL" id="CP001251">
    <property type="protein sequence ID" value="ACK42405.1"/>
    <property type="molecule type" value="Genomic_DNA"/>
</dbReference>
<dbReference type="RefSeq" id="WP_012583488.1">
    <property type="nucleotide sequence ID" value="NC_011661.1"/>
</dbReference>
<dbReference type="RefSeq" id="YP_002353019.1">
    <property type="nucleotide sequence ID" value="NC_011661.1"/>
</dbReference>
<dbReference type="SMR" id="B8E2C8"/>
<dbReference type="FunCoup" id="B8E2C8">
    <property type="interactions" value="376"/>
</dbReference>
<dbReference type="STRING" id="515635.Dtur_1126"/>
<dbReference type="EnsemblBacteria" id="ACK42405">
    <property type="protein sequence ID" value="ACK42405"/>
    <property type="gene ID" value="Dtur_1126"/>
</dbReference>
<dbReference type="KEGG" id="dtu:Dtur_1126"/>
<dbReference type="PATRIC" id="fig|515635.4.peg.1163"/>
<dbReference type="eggNOG" id="COG0107">
    <property type="taxonomic scope" value="Bacteria"/>
</dbReference>
<dbReference type="HOGENOM" id="CLU_048577_4_0_0"/>
<dbReference type="InParanoid" id="B8E2C8"/>
<dbReference type="OrthoDB" id="9781903at2"/>
<dbReference type="UniPathway" id="UPA00031">
    <property type="reaction ID" value="UER00010"/>
</dbReference>
<dbReference type="Proteomes" id="UP000007719">
    <property type="component" value="Chromosome"/>
</dbReference>
<dbReference type="GO" id="GO:0005737">
    <property type="term" value="C:cytoplasm"/>
    <property type="evidence" value="ECO:0007669"/>
    <property type="project" value="UniProtKB-SubCell"/>
</dbReference>
<dbReference type="GO" id="GO:0000107">
    <property type="term" value="F:imidazoleglycerol-phosphate synthase activity"/>
    <property type="evidence" value="ECO:0000318"/>
    <property type="project" value="GO_Central"/>
</dbReference>
<dbReference type="GO" id="GO:0016829">
    <property type="term" value="F:lyase activity"/>
    <property type="evidence" value="ECO:0007669"/>
    <property type="project" value="UniProtKB-KW"/>
</dbReference>
<dbReference type="GO" id="GO:0000105">
    <property type="term" value="P:L-histidine biosynthetic process"/>
    <property type="evidence" value="ECO:0007669"/>
    <property type="project" value="UniProtKB-UniRule"/>
</dbReference>
<dbReference type="CDD" id="cd04731">
    <property type="entry name" value="HisF"/>
    <property type="match status" value="1"/>
</dbReference>
<dbReference type="FunFam" id="3.20.20.70:FF:000006">
    <property type="entry name" value="Imidazole glycerol phosphate synthase subunit HisF"/>
    <property type="match status" value="1"/>
</dbReference>
<dbReference type="Gene3D" id="3.20.20.70">
    <property type="entry name" value="Aldolase class I"/>
    <property type="match status" value="1"/>
</dbReference>
<dbReference type="HAMAP" id="MF_01013">
    <property type="entry name" value="HisF"/>
    <property type="match status" value="1"/>
</dbReference>
<dbReference type="InterPro" id="IPR013785">
    <property type="entry name" value="Aldolase_TIM"/>
</dbReference>
<dbReference type="InterPro" id="IPR006062">
    <property type="entry name" value="His_biosynth"/>
</dbReference>
<dbReference type="InterPro" id="IPR004651">
    <property type="entry name" value="HisF"/>
</dbReference>
<dbReference type="InterPro" id="IPR050064">
    <property type="entry name" value="IGPS_HisA/HisF"/>
</dbReference>
<dbReference type="InterPro" id="IPR011060">
    <property type="entry name" value="RibuloseP-bd_barrel"/>
</dbReference>
<dbReference type="NCBIfam" id="TIGR00735">
    <property type="entry name" value="hisF"/>
    <property type="match status" value="1"/>
</dbReference>
<dbReference type="PANTHER" id="PTHR21235:SF2">
    <property type="entry name" value="IMIDAZOLE GLYCEROL PHOSPHATE SYNTHASE HISHF"/>
    <property type="match status" value="1"/>
</dbReference>
<dbReference type="PANTHER" id="PTHR21235">
    <property type="entry name" value="IMIDAZOLE GLYCEROL PHOSPHATE SYNTHASE SUBUNIT HISF/H IGP SYNTHASE SUBUNIT HISF/H"/>
    <property type="match status" value="1"/>
</dbReference>
<dbReference type="Pfam" id="PF00977">
    <property type="entry name" value="His_biosynth"/>
    <property type="match status" value="1"/>
</dbReference>
<dbReference type="SUPFAM" id="SSF51366">
    <property type="entry name" value="Ribulose-phoshate binding barrel"/>
    <property type="match status" value="1"/>
</dbReference>
<accession>B8E2C8</accession>
<feature type="chain" id="PRO_1000134992" description="Imidazole glycerol phosphate synthase subunit HisF">
    <location>
        <begin position="1"/>
        <end position="252"/>
    </location>
</feature>
<feature type="active site" evidence="1">
    <location>
        <position position="11"/>
    </location>
</feature>
<feature type="active site" evidence="1">
    <location>
        <position position="130"/>
    </location>
</feature>
<organism>
    <name type="scientific">Dictyoglomus turgidum (strain DSM 6724 / Z-1310)</name>
    <dbReference type="NCBI Taxonomy" id="515635"/>
    <lineage>
        <taxon>Bacteria</taxon>
        <taxon>Pseudomonadati</taxon>
        <taxon>Dictyoglomota</taxon>
        <taxon>Dictyoglomia</taxon>
        <taxon>Dictyoglomales</taxon>
        <taxon>Dictyoglomaceae</taxon>
        <taxon>Dictyoglomus</taxon>
    </lineage>
</organism>
<keyword id="KW-0028">Amino-acid biosynthesis</keyword>
<keyword id="KW-0963">Cytoplasm</keyword>
<keyword id="KW-0368">Histidine biosynthesis</keyword>
<keyword id="KW-0456">Lyase</keyword>
<keyword id="KW-1185">Reference proteome</keyword>
<proteinExistence type="inferred from homology"/>